<sequence length="106" mass="12132">MADWNGEYISPYAEHGKKSEQVKKITVSIPLKVLKVLTDERTRRQINNLRHATNSELLCEAFLHAYTGQPLPTDEDLRKDRPDDIPTEAKALMTAMGIEFEAFDEE</sequence>
<keyword id="KW-0028">Amino-acid biosynthesis</keyword>
<keyword id="KW-0963">Cytoplasm</keyword>
<keyword id="KW-0238">DNA-binding</keyword>
<keyword id="KW-0486">Methionine biosynthesis</keyword>
<keyword id="KW-0678">Repressor</keyword>
<keyword id="KW-0804">Transcription</keyword>
<keyword id="KW-0805">Transcription regulation</keyword>
<dbReference type="EMBL" id="CP000789">
    <property type="protein sequence ID" value="ABU69110.1"/>
    <property type="molecule type" value="Genomic_DNA"/>
</dbReference>
<dbReference type="RefSeq" id="WP_005432736.1">
    <property type="nucleotide sequence ID" value="NC_022269.1"/>
</dbReference>
<dbReference type="SMR" id="A7MXB2"/>
<dbReference type="GeneID" id="83583687"/>
<dbReference type="KEGG" id="vha:VIBHAR_00050"/>
<dbReference type="PATRIC" id="fig|338187.25.peg.2473"/>
<dbReference type="Proteomes" id="UP000008152">
    <property type="component" value="Chromosome I"/>
</dbReference>
<dbReference type="GO" id="GO:0005737">
    <property type="term" value="C:cytoplasm"/>
    <property type="evidence" value="ECO:0007669"/>
    <property type="project" value="UniProtKB-SubCell"/>
</dbReference>
<dbReference type="GO" id="GO:0003677">
    <property type="term" value="F:DNA binding"/>
    <property type="evidence" value="ECO:0007669"/>
    <property type="project" value="UniProtKB-KW"/>
</dbReference>
<dbReference type="GO" id="GO:0003700">
    <property type="term" value="F:DNA-binding transcription factor activity"/>
    <property type="evidence" value="ECO:0007669"/>
    <property type="project" value="InterPro"/>
</dbReference>
<dbReference type="GO" id="GO:0009086">
    <property type="term" value="P:methionine biosynthetic process"/>
    <property type="evidence" value="ECO:0007669"/>
    <property type="project" value="UniProtKB-UniRule"/>
</dbReference>
<dbReference type="GO" id="GO:0045892">
    <property type="term" value="P:negative regulation of DNA-templated transcription"/>
    <property type="evidence" value="ECO:0007669"/>
    <property type="project" value="UniProtKB-UniRule"/>
</dbReference>
<dbReference type="CDD" id="cd00490">
    <property type="entry name" value="Met_repressor_MetJ"/>
    <property type="match status" value="1"/>
</dbReference>
<dbReference type="FunFam" id="1.10.140.10:FF:000001">
    <property type="entry name" value="Met repressor"/>
    <property type="match status" value="1"/>
</dbReference>
<dbReference type="Gene3D" id="1.10.140.10">
    <property type="entry name" value="MET Apo-Repressor, subunit A"/>
    <property type="match status" value="1"/>
</dbReference>
<dbReference type="HAMAP" id="MF_00744">
    <property type="entry name" value="MetJ"/>
    <property type="match status" value="1"/>
</dbReference>
<dbReference type="InterPro" id="IPR002084">
    <property type="entry name" value="Met_repressor_MetJ"/>
</dbReference>
<dbReference type="InterPro" id="IPR023453">
    <property type="entry name" value="Met_repressor_MetJ_dom_sf"/>
</dbReference>
<dbReference type="InterPro" id="IPR010985">
    <property type="entry name" value="Ribbon_hlx_hlx"/>
</dbReference>
<dbReference type="NCBIfam" id="NF003622">
    <property type="entry name" value="PRK05264.1"/>
    <property type="match status" value="1"/>
</dbReference>
<dbReference type="Pfam" id="PF01340">
    <property type="entry name" value="MetJ"/>
    <property type="match status" value="1"/>
</dbReference>
<dbReference type="SUPFAM" id="SSF47598">
    <property type="entry name" value="Ribbon-helix-helix"/>
    <property type="match status" value="1"/>
</dbReference>
<feature type="chain" id="PRO_1000046500" description="Met repressor">
    <location>
        <begin position="1"/>
        <end position="106"/>
    </location>
</feature>
<reference key="1">
    <citation type="submission" date="2007-08" db="EMBL/GenBank/DDBJ databases">
        <authorList>
            <consortium name="The Vibrio harveyi Genome Sequencing Project"/>
            <person name="Bassler B."/>
            <person name="Clifton S.W."/>
            <person name="Fulton L."/>
            <person name="Delehaunty K."/>
            <person name="Fronick C."/>
            <person name="Harrison M."/>
            <person name="Markivic C."/>
            <person name="Fulton R."/>
            <person name="Tin-Wollam A.-M."/>
            <person name="Shah N."/>
            <person name="Pepin K."/>
            <person name="Nash W."/>
            <person name="Thiruvilangam P."/>
            <person name="Bhonagiri V."/>
            <person name="Waters C."/>
            <person name="Tu K.C."/>
            <person name="Irgon J."/>
            <person name="Wilson R.K."/>
        </authorList>
    </citation>
    <scope>NUCLEOTIDE SEQUENCE [LARGE SCALE GENOMIC DNA]</scope>
    <source>
        <strain>ATCC BAA-1116 / BB120</strain>
    </source>
</reference>
<accession>A7MXB2</accession>
<comment type="function">
    <text evidence="1">This regulatory protein, when combined with SAM (S-adenosylmethionine) represses the expression of the methionine regulon and of enzymes involved in SAM synthesis.</text>
</comment>
<comment type="subunit">
    <text evidence="1">Homodimer.</text>
</comment>
<comment type="subcellular location">
    <subcellularLocation>
        <location evidence="1">Cytoplasm</location>
    </subcellularLocation>
</comment>
<comment type="domain">
    <text>Does not bind DNA by a helix-turn-helix motif.</text>
</comment>
<comment type="similarity">
    <text evidence="1">Belongs to the MetJ family.</text>
</comment>
<evidence type="ECO:0000255" key="1">
    <source>
        <dbReference type="HAMAP-Rule" id="MF_00744"/>
    </source>
</evidence>
<organism>
    <name type="scientific">Vibrio campbellii (strain ATCC BAA-1116)</name>
    <dbReference type="NCBI Taxonomy" id="2902295"/>
    <lineage>
        <taxon>Bacteria</taxon>
        <taxon>Pseudomonadati</taxon>
        <taxon>Pseudomonadota</taxon>
        <taxon>Gammaproteobacteria</taxon>
        <taxon>Vibrionales</taxon>
        <taxon>Vibrionaceae</taxon>
        <taxon>Vibrio</taxon>
    </lineage>
</organism>
<gene>
    <name evidence="1" type="primary">metJ</name>
    <name type="ordered locus">VIBHAR_00050</name>
</gene>
<protein>
    <recommendedName>
        <fullName evidence="1">Met repressor</fullName>
    </recommendedName>
    <alternativeName>
        <fullName evidence="1">Met regulon regulatory protein MetJ</fullName>
    </alternativeName>
</protein>
<proteinExistence type="inferred from homology"/>
<name>METJ_VIBC1</name>